<sequence>MPLTLGQSLFANFLGNSPRWYKFAILSFLAINPILFYLNPFIAGWVLVIQFIFTLAMALKCYPLQPGGLLAIEAVIIGMTSPTQVLHEIQANLEVLLLLVFMVAGIYFMKQLLLYAFTKMLTKVRSKIVVSMLFCIASAFLSAFLDALTVIAVIITVAVGFYSIYHKVASGKDFSSDHDHTSEAPEQLNESELESFRGFLRNLLMHAGVGTALGGVCTMVGEPQNLIIAAQANWQFGEFAIRMSPVTVPVFFAGILTCFIVEKFKWFGYGAKLPEAVHKILSEYDAYEDARRTPKDKVKLIVQALVGVWLIVGLAFHLASVGLIGLSVIILNTAFNGITDEHALGKAFEEALPFTALLAVFFAVVGVIIDQQLFAPVIQWALSYEGNVQLVIFYIANGLLSMVSDNVFVGTVYINEVKAALLNGQITRDQFDLLAVAINTGTNLPSVATPNGQAAFLFLLTSALAPLIRLSYGRMVMMALPYTIVLSIVGILAIESGFLTDMTQYFYDSHLINHHTAAEAAGKALGGH</sequence>
<organism>
    <name type="scientific">Shewanella amazonensis (strain ATCC BAA-1098 / SB2B)</name>
    <dbReference type="NCBI Taxonomy" id="326297"/>
    <lineage>
        <taxon>Bacteria</taxon>
        <taxon>Pseudomonadati</taxon>
        <taxon>Pseudomonadota</taxon>
        <taxon>Gammaproteobacteria</taxon>
        <taxon>Alteromonadales</taxon>
        <taxon>Shewanellaceae</taxon>
        <taxon>Shewanella</taxon>
    </lineage>
</organism>
<protein>
    <recommendedName>
        <fullName evidence="1">Na(+)/H(+) antiporter NhaB</fullName>
    </recommendedName>
    <alternativeName>
        <fullName evidence="1">Sodium/proton antiporter NhaB</fullName>
    </alternativeName>
</protein>
<accession>A1S6X4</accession>
<dbReference type="EMBL" id="CP000507">
    <property type="protein sequence ID" value="ABM00131.1"/>
    <property type="molecule type" value="Genomic_DNA"/>
</dbReference>
<dbReference type="RefSeq" id="WP_011760038.1">
    <property type="nucleotide sequence ID" value="NC_008700.1"/>
</dbReference>
<dbReference type="SMR" id="A1S6X4"/>
<dbReference type="STRING" id="326297.Sama_1925"/>
<dbReference type="KEGG" id="saz:Sama_1925"/>
<dbReference type="eggNOG" id="COG3067">
    <property type="taxonomic scope" value="Bacteria"/>
</dbReference>
<dbReference type="HOGENOM" id="CLU_041110_0_0_6"/>
<dbReference type="OrthoDB" id="5288732at2"/>
<dbReference type="Proteomes" id="UP000009175">
    <property type="component" value="Chromosome"/>
</dbReference>
<dbReference type="GO" id="GO:0005886">
    <property type="term" value="C:plasma membrane"/>
    <property type="evidence" value="ECO:0007669"/>
    <property type="project" value="UniProtKB-SubCell"/>
</dbReference>
<dbReference type="GO" id="GO:0015385">
    <property type="term" value="F:sodium:proton antiporter activity"/>
    <property type="evidence" value="ECO:0007669"/>
    <property type="project" value="InterPro"/>
</dbReference>
<dbReference type="HAMAP" id="MF_01599">
    <property type="entry name" value="NhaB"/>
    <property type="match status" value="1"/>
</dbReference>
<dbReference type="InterPro" id="IPR004671">
    <property type="entry name" value="Na+/H+_antiporter_NhaB"/>
</dbReference>
<dbReference type="NCBIfam" id="TIGR00774">
    <property type="entry name" value="NhaB"/>
    <property type="match status" value="1"/>
</dbReference>
<dbReference type="NCBIfam" id="NF007093">
    <property type="entry name" value="PRK09547.1"/>
    <property type="match status" value="1"/>
</dbReference>
<dbReference type="PANTHER" id="PTHR43302:SF1">
    <property type="entry name" value="NA(+)_H(+) ANTIPORTER NHAB"/>
    <property type="match status" value="1"/>
</dbReference>
<dbReference type="PANTHER" id="PTHR43302">
    <property type="entry name" value="TRANSPORTER ARSB-RELATED"/>
    <property type="match status" value="1"/>
</dbReference>
<dbReference type="Pfam" id="PF06450">
    <property type="entry name" value="NhaB"/>
    <property type="match status" value="1"/>
</dbReference>
<keyword id="KW-0050">Antiport</keyword>
<keyword id="KW-0997">Cell inner membrane</keyword>
<keyword id="KW-1003">Cell membrane</keyword>
<keyword id="KW-0406">Ion transport</keyword>
<keyword id="KW-0472">Membrane</keyword>
<keyword id="KW-1185">Reference proteome</keyword>
<keyword id="KW-0915">Sodium</keyword>
<keyword id="KW-0739">Sodium transport</keyword>
<keyword id="KW-0812">Transmembrane</keyword>
<keyword id="KW-1133">Transmembrane helix</keyword>
<keyword id="KW-0813">Transport</keyword>
<evidence type="ECO:0000255" key="1">
    <source>
        <dbReference type="HAMAP-Rule" id="MF_01599"/>
    </source>
</evidence>
<proteinExistence type="inferred from homology"/>
<comment type="function">
    <text evidence="1">Na(+)/H(+) antiporter that extrudes sodium in exchange for external protons.</text>
</comment>
<comment type="catalytic activity">
    <reaction evidence="1">
        <text>2 Na(+)(in) + 3 H(+)(out) = 2 Na(+)(out) + 3 H(+)(in)</text>
        <dbReference type="Rhea" id="RHEA:29247"/>
        <dbReference type="ChEBI" id="CHEBI:15378"/>
        <dbReference type="ChEBI" id="CHEBI:29101"/>
    </reaction>
    <physiologicalReaction direction="left-to-right" evidence="1">
        <dbReference type="Rhea" id="RHEA:29248"/>
    </physiologicalReaction>
</comment>
<comment type="subcellular location">
    <subcellularLocation>
        <location evidence="1">Cell inner membrane</location>
        <topology evidence="1">Multi-pass membrane protein</topology>
    </subcellularLocation>
</comment>
<comment type="similarity">
    <text evidence="1">Belongs to the NhaB Na(+)/H(+) (TC 2.A.34) antiporter family.</text>
</comment>
<reference key="1">
    <citation type="submission" date="2006-12" db="EMBL/GenBank/DDBJ databases">
        <title>Complete sequence of Shewanella amazonensis SB2B.</title>
        <authorList>
            <consortium name="US DOE Joint Genome Institute"/>
            <person name="Copeland A."/>
            <person name="Lucas S."/>
            <person name="Lapidus A."/>
            <person name="Barry K."/>
            <person name="Detter J.C."/>
            <person name="Glavina del Rio T."/>
            <person name="Hammon N."/>
            <person name="Israni S."/>
            <person name="Dalin E."/>
            <person name="Tice H."/>
            <person name="Pitluck S."/>
            <person name="Munk A.C."/>
            <person name="Brettin T."/>
            <person name="Bruce D."/>
            <person name="Han C."/>
            <person name="Tapia R."/>
            <person name="Gilna P."/>
            <person name="Schmutz J."/>
            <person name="Larimer F."/>
            <person name="Land M."/>
            <person name="Hauser L."/>
            <person name="Kyrpides N."/>
            <person name="Mikhailova N."/>
            <person name="Fredrickson J."/>
            <person name="Richardson P."/>
        </authorList>
    </citation>
    <scope>NUCLEOTIDE SEQUENCE [LARGE SCALE GENOMIC DNA]</scope>
    <source>
        <strain>ATCC BAA-1098 / SB2B</strain>
    </source>
</reference>
<feature type="chain" id="PRO_0000333123" description="Na(+)/H(+) antiporter NhaB">
    <location>
        <begin position="1"/>
        <end position="528"/>
    </location>
</feature>
<feature type="transmembrane region" description="Helical" evidence="1">
    <location>
        <begin position="23"/>
        <end position="45"/>
    </location>
</feature>
<feature type="transmembrane region" description="Helical" evidence="1">
    <location>
        <begin position="66"/>
        <end position="86"/>
    </location>
</feature>
<feature type="transmembrane region" description="Helical" evidence="1">
    <location>
        <begin position="95"/>
        <end position="115"/>
    </location>
</feature>
<feature type="transmembrane region" description="Helical" evidence="1">
    <location>
        <begin position="130"/>
        <end position="164"/>
    </location>
</feature>
<feature type="transmembrane region" description="Helical" evidence="1">
    <location>
        <begin position="203"/>
        <end position="223"/>
    </location>
</feature>
<feature type="transmembrane region" description="Helical" evidence="1">
    <location>
        <begin position="241"/>
        <end position="261"/>
    </location>
</feature>
<feature type="transmembrane region" description="Helical" evidence="1">
    <location>
        <begin position="310"/>
        <end position="330"/>
    </location>
</feature>
<feature type="transmembrane region" description="Helical" evidence="1">
    <location>
        <begin position="349"/>
        <end position="369"/>
    </location>
</feature>
<feature type="transmembrane region" description="Helical" evidence="1">
    <location>
        <begin position="390"/>
        <end position="410"/>
    </location>
</feature>
<feature type="transmembrane region" description="Helical" evidence="1">
    <location>
        <begin position="448"/>
        <end position="468"/>
    </location>
</feature>
<feature type="transmembrane region" description="Helical" evidence="1">
    <location>
        <begin position="475"/>
        <end position="495"/>
    </location>
</feature>
<gene>
    <name evidence="1" type="primary">nhaB</name>
    <name type="ordered locus">Sama_1925</name>
</gene>
<name>NHAB_SHEAM</name>